<gene>
    <name evidence="1" type="primary">rpsK</name>
    <name evidence="1" type="synonym">rps11</name>
    <name type="ordered locus">Tery_2989</name>
</gene>
<evidence type="ECO:0000255" key="1">
    <source>
        <dbReference type="HAMAP-Rule" id="MF_01310"/>
    </source>
</evidence>
<evidence type="ECO:0000305" key="2"/>
<organism>
    <name type="scientific">Trichodesmium erythraeum (strain IMS101)</name>
    <dbReference type="NCBI Taxonomy" id="203124"/>
    <lineage>
        <taxon>Bacteria</taxon>
        <taxon>Bacillati</taxon>
        <taxon>Cyanobacteriota</taxon>
        <taxon>Cyanophyceae</taxon>
        <taxon>Oscillatoriophycideae</taxon>
        <taxon>Oscillatoriales</taxon>
        <taxon>Microcoleaceae</taxon>
        <taxon>Trichodesmium</taxon>
    </lineage>
</organism>
<comment type="function">
    <text evidence="1">Located on the platform of the 30S subunit, it bridges several disparate RNA helices of the 16S rRNA. Forms part of the Shine-Dalgarno cleft in the 70S ribosome.</text>
</comment>
<comment type="subunit">
    <text evidence="1">Part of the 30S ribosomal subunit. Interacts with proteins S7 and S18. Binds to IF-3.</text>
</comment>
<comment type="similarity">
    <text evidence="1">Belongs to the universal ribosomal protein uS11 family.</text>
</comment>
<protein>
    <recommendedName>
        <fullName evidence="1">Small ribosomal subunit protein uS11</fullName>
    </recommendedName>
    <alternativeName>
        <fullName evidence="2">30S ribosomal protein S11</fullName>
    </alternativeName>
</protein>
<keyword id="KW-0687">Ribonucleoprotein</keyword>
<keyword id="KW-0689">Ribosomal protein</keyword>
<keyword id="KW-0694">RNA-binding</keyword>
<keyword id="KW-0699">rRNA-binding</keyword>
<dbReference type="EMBL" id="CP000393">
    <property type="protein sequence ID" value="ABG52144.1"/>
    <property type="molecule type" value="Genomic_DNA"/>
</dbReference>
<dbReference type="RefSeq" id="WP_011612500.1">
    <property type="nucleotide sequence ID" value="NC_008312.1"/>
</dbReference>
<dbReference type="SMR" id="Q110D0"/>
<dbReference type="STRING" id="203124.Tery_2989"/>
<dbReference type="KEGG" id="ter:Tery_2989"/>
<dbReference type="eggNOG" id="COG0100">
    <property type="taxonomic scope" value="Bacteria"/>
</dbReference>
<dbReference type="HOGENOM" id="CLU_072439_5_0_3"/>
<dbReference type="OrthoDB" id="9806415at2"/>
<dbReference type="GO" id="GO:1990904">
    <property type="term" value="C:ribonucleoprotein complex"/>
    <property type="evidence" value="ECO:0007669"/>
    <property type="project" value="UniProtKB-KW"/>
</dbReference>
<dbReference type="GO" id="GO:0005840">
    <property type="term" value="C:ribosome"/>
    <property type="evidence" value="ECO:0007669"/>
    <property type="project" value="UniProtKB-KW"/>
</dbReference>
<dbReference type="GO" id="GO:0019843">
    <property type="term" value="F:rRNA binding"/>
    <property type="evidence" value="ECO:0007669"/>
    <property type="project" value="UniProtKB-UniRule"/>
</dbReference>
<dbReference type="GO" id="GO:0003735">
    <property type="term" value="F:structural constituent of ribosome"/>
    <property type="evidence" value="ECO:0007669"/>
    <property type="project" value="InterPro"/>
</dbReference>
<dbReference type="GO" id="GO:0006412">
    <property type="term" value="P:translation"/>
    <property type="evidence" value="ECO:0007669"/>
    <property type="project" value="UniProtKB-UniRule"/>
</dbReference>
<dbReference type="FunFam" id="3.30.420.80:FF:000001">
    <property type="entry name" value="30S ribosomal protein S11"/>
    <property type="match status" value="1"/>
</dbReference>
<dbReference type="Gene3D" id="3.30.420.80">
    <property type="entry name" value="Ribosomal protein S11"/>
    <property type="match status" value="1"/>
</dbReference>
<dbReference type="HAMAP" id="MF_01310">
    <property type="entry name" value="Ribosomal_uS11"/>
    <property type="match status" value="1"/>
</dbReference>
<dbReference type="InterPro" id="IPR001971">
    <property type="entry name" value="Ribosomal_uS11"/>
</dbReference>
<dbReference type="InterPro" id="IPR019981">
    <property type="entry name" value="Ribosomal_uS11_bac-type"/>
</dbReference>
<dbReference type="InterPro" id="IPR018102">
    <property type="entry name" value="Ribosomal_uS11_CS"/>
</dbReference>
<dbReference type="InterPro" id="IPR036967">
    <property type="entry name" value="Ribosomal_uS11_sf"/>
</dbReference>
<dbReference type="NCBIfam" id="NF003698">
    <property type="entry name" value="PRK05309.1"/>
    <property type="match status" value="1"/>
</dbReference>
<dbReference type="NCBIfam" id="TIGR03632">
    <property type="entry name" value="uS11_bact"/>
    <property type="match status" value="1"/>
</dbReference>
<dbReference type="PANTHER" id="PTHR11759">
    <property type="entry name" value="40S RIBOSOMAL PROTEIN S14/30S RIBOSOMAL PROTEIN S11"/>
    <property type="match status" value="1"/>
</dbReference>
<dbReference type="Pfam" id="PF00411">
    <property type="entry name" value="Ribosomal_S11"/>
    <property type="match status" value="1"/>
</dbReference>
<dbReference type="PIRSF" id="PIRSF002131">
    <property type="entry name" value="Ribosomal_S11"/>
    <property type="match status" value="1"/>
</dbReference>
<dbReference type="SUPFAM" id="SSF53137">
    <property type="entry name" value="Translational machinery components"/>
    <property type="match status" value="1"/>
</dbReference>
<dbReference type="PROSITE" id="PS00054">
    <property type="entry name" value="RIBOSOMAL_S11"/>
    <property type="match status" value="1"/>
</dbReference>
<reference key="1">
    <citation type="journal article" date="2015" name="Proc. Natl. Acad. Sci. U.S.A.">
        <title>Trichodesmium genome maintains abundant, widespread noncoding DNA in situ, despite oligotrophic lifestyle.</title>
        <authorList>
            <person name="Walworth N."/>
            <person name="Pfreundt U."/>
            <person name="Nelson W.C."/>
            <person name="Mincer T."/>
            <person name="Heidelberg J.F."/>
            <person name="Fu F."/>
            <person name="Waterbury J.B."/>
            <person name="Glavina del Rio T."/>
            <person name="Goodwin L."/>
            <person name="Kyrpides N.C."/>
            <person name="Land M.L."/>
            <person name="Woyke T."/>
            <person name="Hutchins D.A."/>
            <person name="Hess W.R."/>
            <person name="Webb E.A."/>
        </authorList>
    </citation>
    <scope>NUCLEOTIDE SEQUENCE [LARGE SCALE GENOMIC DNA]</scope>
    <source>
        <strain>IMS101</strain>
    </source>
</reference>
<feature type="chain" id="PRO_0000294882" description="Small ribosomal subunit protein uS11">
    <location>
        <begin position="1"/>
        <end position="131"/>
    </location>
</feature>
<sequence>MARQPTKKTGPKKQKKNVPNGVAYIQSTFNNTIVTIADLNGEVISWASAGSSGFKGAKKGTPFAAQTAAESAARRANDQGMRQVQVMVSGPGAGRETAIRALQGAGLEITLIRDITPIPHNGCRPPKRRRV</sequence>
<proteinExistence type="inferred from homology"/>
<accession>Q110D0</accession>
<name>RS11_TRIEI</name>